<protein>
    <recommendedName>
        <fullName evidence="1">Orotate phosphoribosyltransferase</fullName>
        <shortName evidence="1">OPRT</shortName>
        <shortName evidence="1">OPRTase</shortName>
        <ecNumber evidence="1">2.4.2.10</ecNumber>
    </recommendedName>
</protein>
<organism>
    <name type="scientific">Buchnera aphidicola subsp. Baizongia pistaciae (strain Bp)</name>
    <dbReference type="NCBI Taxonomy" id="224915"/>
    <lineage>
        <taxon>Bacteria</taxon>
        <taxon>Pseudomonadati</taxon>
        <taxon>Pseudomonadota</taxon>
        <taxon>Gammaproteobacteria</taxon>
        <taxon>Enterobacterales</taxon>
        <taxon>Erwiniaceae</taxon>
        <taxon>Buchnera</taxon>
    </lineage>
</organism>
<accession>P59575</accession>
<feature type="chain" id="PRO_0000110682" description="Orotate phosphoribosyltransferase">
    <location>
        <begin position="1"/>
        <end position="206"/>
    </location>
</feature>
<feature type="binding site" description="in other chain" evidence="1">
    <location>
        <position position="26"/>
    </location>
    <ligand>
        <name>5-phospho-alpha-D-ribose 1-diphosphate</name>
        <dbReference type="ChEBI" id="CHEBI:58017"/>
        <note>ligand shared between dimeric partners</note>
    </ligand>
</feature>
<feature type="binding site" description="in other chain" evidence="1">
    <location>
        <begin position="72"/>
        <end position="73"/>
    </location>
    <ligand>
        <name>5-phospho-alpha-D-ribose 1-diphosphate</name>
        <dbReference type="ChEBI" id="CHEBI:58017"/>
        <note>ligand shared between dimeric partners</note>
    </ligand>
</feature>
<feature type="binding site" evidence="1">
    <location>
        <position position="99"/>
    </location>
    <ligand>
        <name>5-phospho-alpha-D-ribose 1-diphosphate</name>
        <dbReference type="ChEBI" id="CHEBI:58017"/>
        <note>ligand shared between dimeric partners</note>
    </ligand>
</feature>
<feature type="binding site" description="in other chain" evidence="1">
    <location>
        <position position="100"/>
    </location>
    <ligand>
        <name>5-phospho-alpha-D-ribose 1-diphosphate</name>
        <dbReference type="ChEBI" id="CHEBI:58017"/>
        <note>ligand shared between dimeric partners</note>
    </ligand>
</feature>
<feature type="binding site" evidence="1">
    <location>
        <position position="103"/>
    </location>
    <ligand>
        <name>5-phospho-alpha-D-ribose 1-diphosphate</name>
        <dbReference type="ChEBI" id="CHEBI:58017"/>
        <note>ligand shared between dimeric partners</note>
    </ligand>
</feature>
<feature type="binding site" evidence="1">
    <location>
        <position position="105"/>
    </location>
    <ligand>
        <name>5-phospho-alpha-D-ribose 1-diphosphate</name>
        <dbReference type="ChEBI" id="CHEBI:58017"/>
        <note>ligand shared between dimeric partners</note>
    </ligand>
</feature>
<feature type="binding site" description="in other chain" evidence="1">
    <location>
        <begin position="124"/>
        <end position="132"/>
    </location>
    <ligand>
        <name>5-phospho-alpha-D-ribose 1-diphosphate</name>
        <dbReference type="ChEBI" id="CHEBI:58017"/>
        <note>ligand shared between dimeric partners</note>
    </ligand>
</feature>
<feature type="binding site" evidence="1">
    <location>
        <position position="128"/>
    </location>
    <ligand>
        <name>orotate</name>
        <dbReference type="ChEBI" id="CHEBI:30839"/>
    </ligand>
</feature>
<feature type="binding site" evidence="1">
    <location>
        <position position="157"/>
    </location>
    <ligand>
        <name>orotate</name>
        <dbReference type="ChEBI" id="CHEBI:30839"/>
    </ligand>
</feature>
<dbReference type="EC" id="2.4.2.10" evidence="1"/>
<dbReference type="EMBL" id="AE016826">
    <property type="protein sequence ID" value="AAO27209.1"/>
    <property type="molecule type" value="Genomic_DNA"/>
</dbReference>
<dbReference type="RefSeq" id="WP_011091610.1">
    <property type="nucleotide sequence ID" value="NC_004545.1"/>
</dbReference>
<dbReference type="SMR" id="P59575"/>
<dbReference type="STRING" id="224915.bbp_506"/>
<dbReference type="KEGG" id="bab:bbp_506"/>
<dbReference type="eggNOG" id="COG0461">
    <property type="taxonomic scope" value="Bacteria"/>
</dbReference>
<dbReference type="HOGENOM" id="CLU_074878_0_1_6"/>
<dbReference type="OrthoDB" id="9779060at2"/>
<dbReference type="UniPathway" id="UPA00070">
    <property type="reaction ID" value="UER00119"/>
</dbReference>
<dbReference type="Proteomes" id="UP000000601">
    <property type="component" value="Chromosome"/>
</dbReference>
<dbReference type="GO" id="GO:0005737">
    <property type="term" value="C:cytoplasm"/>
    <property type="evidence" value="ECO:0007669"/>
    <property type="project" value="TreeGrafter"/>
</dbReference>
<dbReference type="GO" id="GO:0000287">
    <property type="term" value="F:magnesium ion binding"/>
    <property type="evidence" value="ECO:0007669"/>
    <property type="project" value="UniProtKB-UniRule"/>
</dbReference>
<dbReference type="GO" id="GO:0004588">
    <property type="term" value="F:orotate phosphoribosyltransferase activity"/>
    <property type="evidence" value="ECO:0007669"/>
    <property type="project" value="UniProtKB-UniRule"/>
</dbReference>
<dbReference type="GO" id="GO:0006207">
    <property type="term" value="P:'de novo' pyrimidine nucleobase biosynthetic process"/>
    <property type="evidence" value="ECO:0007669"/>
    <property type="project" value="TreeGrafter"/>
</dbReference>
<dbReference type="GO" id="GO:0044205">
    <property type="term" value="P:'de novo' UMP biosynthetic process"/>
    <property type="evidence" value="ECO:0007669"/>
    <property type="project" value="UniProtKB-UniRule"/>
</dbReference>
<dbReference type="GO" id="GO:0046132">
    <property type="term" value="P:pyrimidine ribonucleoside biosynthetic process"/>
    <property type="evidence" value="ECO:0007669"/>
    <property type="project" value="TreeGrafter"/>
</dbReference>
<dbReference type="CDD" id="cd06223">
    <property type="entry name" value="PRTases_typeI"/>
    <property type="match status" value="1"/>
</dbReference>
<dbReference type="Gene3D" id="3.40.50.2020">
    <property type="match status" value="1"/>
</dbReference>
<dbReference type="HAMAP" id="MF_01208">
    <property type="entry name" value="PyrE"/>
    <property type="match status" value="1"/>
</dbReference>
<dbReference type="InterPro" id="IPR023031">
    <property type="entry name" value="OPRT"/>
</dbReference>
<dbReference type="InterPro" id="IPR004467">
    <property type="entry name" value="Or_phspho_trans_dom"/>
</dbReference>
<dbReference type="InterPro" id="IPR000836">
    <property type="entry name" value="PRibTrfase_dom"/>
</dbReference>
<dbReference type="InterPro" id="IPR029057">
    <property type="entry name" value="PRTase-like"/>
</dbReference>
<dbReference type="NCBIfam" id="TIGR00336">
    <property type="entry name" value="pyrE"/>
    <property type="match status" value="1"/>
</dbReference>
<dbReference type="PANTHER" id="PTHR46683">
    <property type="entry name" value="OROTATE PHOSPHORIBOSYLTRANSFERASE 1-RELATED"/>
    <property type="match status" value="1"/>
</dbReference>
<dbReference type="PANTHER" id="PTHR46683:SF1">
    <property type="entry name" value="OROTATE PHOSPHORIBOSYLTRANSFERASE 1-RELATED"/>
    <property type="match status" value="1"/>
</dbReference>
<dbReference type="Pfam" id="PF00156">
    <property type="entry name" value="Pribosyltran"/>
    <property type="match status" value="1"/>
</dbReference>
<dbReference type="SUPFAM" id="SSF53271">
    <property type="entry name" value="PRTase-like"/>
    <property type="match status" value="1"/>
</dbReference>
<dbReference type="PROSITE" id="PS00103">
    <property type="entry name" value="PUR_PYR_PR_TRANSFER"/>
    <property type="match status" value="1"/>
</dbReference>
<sequence length="206" mass="23941">MCKWKIQFLDFCLEKKVLKFGKFQLKSGKCSPYYFNSGLFNTGNDLQKLGYFYAKTIIESNLDYKAIFGVAYKGIPIVISTAIALRKYFNINIPYCFNRKELKKHGEKGNFIGQKLTGKIILLDDVMTSGFSINDTINFIHSHANTKISGIIIALDRTRNINNKKNIQKNIEKKYNLKIFSIISILDIINYFKKKKHLHIYLKYII</sequence>
<name>PYRE_BUCBP</name>
<comment type="function">
    <text evidence="1">Catalyzes the transfer of a ribosyl phosphate group from 5-phosphoribose 1-diphosphate to orotate, leading to the formation of orotidine monophosphate (OMP).</text>
</comment>
<comment type="catalytic activity">
    <reaction evidence="1">
        <text>orotidine 5'-phosphate + diphosphate = orotate + 5-phospho-alpha-D-ribose 1-diphosphate</text>
        <dbReference type="Rhea" id="RHEA:10380"/>
        <dbReference type="ChEBI" id="CHEBI:30839"/>
        <dbReference type="ChEBI" id="CHEBI:33019"/>
        <dbReference type="ChEBI" id="CHEBI:57538"/>
        <dbReference type="ChEBI" id="CHEBI:58017"/>
        <dbReference type="EC" id="2.4.2.10"/>
    </reaction>
</comment>
<comment type="cofactor">
    <cofactor evidence="1">
        <name>Mg(2+)</name>
        <dbReference type="ChEBI" id="CHEBI:18420"/>
    </cofactor>
</comment>
<comment type="pathway">
    <text evidence="1">Pyrimidine metabolism; UMP biosynthesis via de novo pathway; UMP from orotate: step 1/2.</text>
</comment>
<comment type="subunit">
    <text evidence="1">Homodimer.</text>
</comment>
<comment type="similarity">
    <text evidence="1">Belongs to the purine/pyrimidine phosphoribosyltransferase family. PyrE subfamily.</text>
</comment>
<evidence type="ECO:0000255" key="1">
    <source>
        <dbReference type="HAMAP-Rule" id="MF_01208"/>
    </source>
</evidence>
<proteinExistence type="inferred from homology"/>
<reference key="1">
    <citation type="journal article" date="2003" name="Proc. Natl. Acad. Sci. U.S.A.">
        <title>Reductive genome evolution in Buchnera aphidicola.</title>
        <authorList>
            <person name="van Ham R.C.H.J."/>
            <person name="Kamerbeek J."/>
            <person name="Palacios C."/>
            <person name="Rausell C."/>
            <person name="Abascal F."/>
            <person name="Bastolla U."/>
            <person name="Fernandez J.M."/>
            <person name="Jimenez L."/>
            <person name="Postigo M."/>
            <person name="Silva F.J."/>
            <person name="Tamames J."/>
            <person name="Viguera E."/>
            <person name="Latorre A."/>
            <person name="Valencia A."/>
            <person name="Moran F."/>
            <person name="Moya A."/>
        </authorList>
    </citation>
    <scope>NUCLEOTIDE SEQUENCE [LARGE SCALE GENOMIC DNA]</scope>
    <source>
        <strain>Bp</strain>
    </source>
</reference>
<gene>
    <name evidence="1" type="primary">pyrE</name>
    <name type="ordered locus">bbp_506</name>
</gene>
<keyword id="KW-0328">Glycosyltransferase</keyword>
<keyword id="KW-0460">Magnesium</keyword>
<keyword id="KW-0665">Pyrimidine biosynthesis</keyword>
<keyword id="KW-1185">Reference proteome</keyword>
<keyword id="KW-0808">Transferase</keyword>